<accession>Q48NT5</accession>
<protein>
    <recommendedName>
        <fullName evidence="1">Chaperone SurA</fullName>
    </recommendedName>
    <alternativeName>
        <fullName evidence="1">Peptidyl-prolyl cis-trans isomerase SurA</fullName>
        <shortName evidence="1">PPIase SurA</shortName>
        <ecNumber evidence="1">5.2.1.8</ecNumber>
    </alternativeName>
    <alternativeName>
        <fullName evidence="1">Rotamase SurA</fullName>
    </alternativeName>
</protein>
<name>SURA_PSE14</name>
<keyword id="KW-0143">Chaperone</keyword>
<keyword id="KW-0413">Isomerase</keyword>
<keyword id="KW-0574">Periplasm</keyword>
<keyword id="KW-0677">Repeat</keyword>
<keyword id="KW-0697">Rotamase</keyword>
<keyword id="KW-0732">Signal</keyword>
<gene>
    <name evidence="1" type="primary">surA</name>
    <name type="ordered locus">PSPPH_0635</name>
</gene>
<sequence length="428" mass="47429">MLGALLLSGAVHAAVQPLESVVAIVDNDVIMKSQMDQRVREVQQTIAKRGSGVPPAEALQPQVLDRLILENLQLQMGERSGIRVSDNELNQAIGTIAQRNNMSVEQFRAALAHDGLSYNDAREQVRREMIISRVRQRRVAERIQVSQQEVKNFLASDQGKAQLSEEFHLANILIATPDSASSDAIQAAAVKAKGIYDQLKKGADFTRLAATTSSSENALEGGDMGWRKAAQLPPPFGDMLSAMPVGDVTPPARTPGGFIILKLLEKRGGQGQAQMRDEVHVRHILIKPSEIRNEEETKRLAEKIYDRIQNGEDFAELAKSFSEDPGSALNGGDLNWVDPNSLVPEFRQVMNETPQGELSKPFKTAYGWHVLEVLGRRSTDATDQAREQQALNVLRNRKYDEELQTWLRQIRDEAYVEIKLPGATQAAQ</sequence>
<proteinExistence type="inferred from homology"/>
<comment type="function">
    <text evidence="1">Chaperone involved in the correct folding and assembly of outer membrane proteins. Recognizes specific patterns of aromatic residues and the orientation of their side chains, which are found more frequently in integral outer membrane proteins. May act in both early periplasmic and late outer membrane-associated steps of protein maturation.</text>
</comment>
<comment type="catalytic activity">
    <reaction evidence="1">
        <text>[protein]-peptidylproline (omega=180) = [protein]-peptidylproline (omega=0)</text>
        <dbReference type="Rhea" id="RHEA:16237"/>
        <dbReference type="Rhea" id="RHEA-COMP:10747"/>
        <dbReference type="Rhea" id="RHEA-COMP:10748"/>
        <dbReference type="ChEBI" id="CHEBI:83833"/>
        <dbReference type="ChEBI" id="CHEBI:83834"/>
        <dbReference type="EC" id="5.2.1.8"/>
    </reaction>
</comment>
<comment type="subcellular location">
    <subcellularLocation>
        <location evidence="1">Periplasm</location>
    </subcellularLocation>
    <text evidence="1">Is capable of associating with the outer membrane.</text>
</comment>
<comment type="domain">
    <text evidence="1">The PPIase activity resides only in the second parvulin domain. The N-terminal region and the C-terminal tail are necessary and sufficient for the chaperone activity of SurA. The PPIase activity is dispensable for SurA to function as a chaperone. The N-terminal region and the C-terminal tail are also required for porin recognition.</text>
</comment>
<comment type="sequence caution" evidence="2">
    <conflict type="erroneous initiation">
        <sequence resource="EMBL-CDS" id="AAZ33758"/>
    </conflict>
</comment>
<reference key="1">
    <citation type="journal article" date="2005" name="J. Bacteriol.">
        <title>Whole-genome sequence analysis of Pseudomonas syringae pv. phaseolicola 1448A reveals divergence among pathovars in genes involved in virulence and transposition.</title>
        <authorList>
            <person name="Joardar V."/>
            <person name="Lindeberg M."/>
            <person name="Jackson R.W."/>
            <person name="Selengut J."/>
            <person name="Dodson R."/>
            <person name="Brinkac L.M."/>
            <person name="Daugherty S.C."/>
            <person name="DeBoy R.T."/>
            <person name="Durkin A.S."/>
            <person name="Gwinn Giglio M."/>
            <person name="Madupu R."/>
            <person name="Nelson W.C."/>
            <person name="Rosovitz M.J."/>
            <person name="Sullivan S.A."/>
            <person name="Crabtree J."/>
            <person name="Creasy T."/>
            <person name="Davidsen T.M."/>
            <person name="Haft D.H."/>
            <person name="Zafar N."/>
            <person name="Zhou L."/>
            <person name="Halpin R."/>
            <person name="Holley T."/>
            <person name="Khouri H.M."/>
            <person name="Feldblyum T.V."/>
            <person name="White O."/>
            <person name="Fraser C.M."/>
            <person name="Chatterjee A.K."/>
            <person name="Cartinhour S."/>
            <person name="Schneider D."/>
            <person name="Mansfield J.W."/>
            <person name="Collmer A."/>
            <person name="Buell R."/>
        </authorList>
    </citation>
    <scope>NUCLEOTIDE SEQUENCE [LARGE SCALE GENOMIC DNA]</scope>
    <source>
        <strain>1448A / Race 6</strain>
    </source>
</reference>
<evidence type="ECO:0000255" key="1">
    <source>
        <dbReference type="HAMAP-Rule" id="MF_01183"/>
    </source>
</evidence>
<evidence type="ECO:0000305" key="2"/>
<organism>
    <name type="scientific">Pseudomonas savastanoi pv. phaseolicola (strain 1448A / Race 6)</name>
    <name type="common">Pseudomonas syringae pv. phaseolicola (strain 1448A / Race 6)</name>
    <dbReference type="NCBI Taxonomy" id="264730"/>
    <lineage>
        <taxon>Bacteria</taxon>
        <taxon>Pseudomonadati</taxon>
        <taxon>Pseudomonadota</taxon>
        <taxon>Gammaproteobacteria</taxon>
        <taxon>Pseudomonadales</taxon>
        <taxon>Pseudomonadaceae</taxon>
        <taxon>Pseudomonas</taxon>
    </lineage>
</organism>
<feature type="signal peptide" evidence="1">
    <location>
        <begin position="1"/>
        <end position="13"/>
    </location>
</feature>
<feature type="chain" id="PRO_0000270030" description="Chaperone SurA">
    <location>
        <begin position="14"/>
        <end position="428"/>
    </location>
</feature>
<feature type="domain" description="PpiC 1" evidence="1">
    <location>
        <begin position="164"/>
        <end position="265"/>
    </location>
</feature>
<feature type="domain" description="PpiC 2" evidence="1">
    <location>
        <begin position="276"/>
        <end position="375"/>
    </location>
</feature>
<dbReference type="EC" id="5.2.1.8" evidence="1"/>
<dbReference type="EMBL" id="CP000058">
    <property type="protein sequence ID" value="AAZ33758.1"/>
    <property type="status" value="ALT_INIT"/>
    <property type="molecule type" value="Genomic_DNA"/>
</dbReference>
<dbReference type="SMR" id="Q48NT5"/>
<dbReference type="KEGG" id="psp:PSPPH_0635"/>
<dbReference type="eggNOG" id="COG0760">
    <property type="taxonomic scope" value="Bacteria"/>
</dbReference>
<dbReference type="HOGENOM" id="CLU_034646_11_0_6"/>
<dbReference type="Proteomes" id="UP000000551">
    <property type="component" value="Chromosome"/>
</dbReference>
<dbReference type="GO" id="GO:0030288">
    <property type="term" value="C:outer membrane-bounded periplasmic space"/>
    <property type="evidence" value="ECO:0007669"/>
    <property type="project" value="InterPro"/>
</dbReference>
<dbReference type="GO" id="GO:0042277">
    <property type="term" value="F:peptide binding"/>
    <property type="evidence" value="ECO:0007669"/>
    <property type="project" value="InterPro"/>
</dbReference>
<dbReference type="GO" id="GO:0003755">
    <property type="term" value="F:peptidyl-prolyl cis-trans isomerase activity"/>
    <property type="evidence" value="ECO:0007669"/>
    <property type="project" value="UniProtKB-UniRule"/>
</dbReference>
<dbReference type="GO" id="GO:0051082">
    <property type="term" value="F:unfolded protein binding"/>
    <property type="evidence" value="ECO:0007669"/>
    <property type="project" value="UniProtKB-UniRule"/>
</dbReference>
<dbReference type="GO" id="GO:0043165">
    <property type="term" value="P:Gram-negative-bacterium-type cell outer membrane assembly"/>
    <property type="evidence" value="ECO:0007669"/>
    <property type="project" value="InterPro"/>
</dbReference>
<dbReference type="GO" id="GO:0006457">
    <property type="term" value="P:protein folding"/>
    <property type="evidence" value="ECO:0007669"/>
    <property type="project" value="UniProtKB-UniRule"/>
</dbReference>
<dbReference type="GO" id="GO:0050821">
    <property type="term" value="P:protein stabilization"/>
    <property type="evidence" value="ECO:0007669"/>
    <property type="project" value="InterPro"/>
</dbReference>
<dbReference type="Gene3D" id="3.10.50.40">
    <property type="match status" value="2"/>
</dbReference>
<dbReference type="Gene3D" id="1.10.4030.10">
    <property type="entry name" value="Porin chaperone SurA, peptide-binding domain"/>
    <property type="match status" value="1"/>
</dbReference>
<dbReference type="HAMAP" id="MF_01183">
    <property type="entry name" value="Chaperone_SurA"/>
    <property type="match status" value="1"/>
</dbReference>
<dbReference type="InterPro" id="IPR050280">
    <property type="entry name" value="OMP_Chaperone_SurA"/>
</dbReference>
<dbReference type="InterPro" id="IPR046357">
    <property type="entry name" value="PPIase_dom_sf"/>
</dbReference>
<dbReference type="InterPro" id="IPR000297">
    <property type="entry name" value="PPIase_PpiC"/>
</dbReference>
<dbReference type="InterPro" id="IPR023034">
    <property type="entry name" value="PPIase_SurA"/>
</dbReference>
<dbReference type="InterPro" id="IPR015391">
    <property type="entry name" value="SurA_N"/>
</dbReference>
<dbReference type="InterPro" id="IPR027304">
    <property type="entry name" value="Trigger_fact/SurA_dom_sf"/>
</dbReference>
<dbReference type="PANTHER" id="PTHR47637">
    <property type="entry name" value="CHAPERONE SURA"/>
    <property type="match status" value="1"/>
</dbReference>
<dbReference type="PANTHER" id="PTHR47637:SF1">
    <property type="entry name" value="CHAPERONE SURA"/>
    <property type="match status" value="1"/>
</dbReference>
<dbReference type="Pfam" id="PF00639">
    <property type="entry name" value="Rotamase"/>
    <property type="match status" value="1"/>
</dbReference>
<dbReference type="Pfam" id="PF13616">
    <property type="entry name" value="Rotamase_3"/>
    <property type="match status" value="1"/>
</dbReference>
<dbReference type="Pfam" id="PF09312">
    <property type="entry name" value="SurA_N"/>
    <property type="match status" value="1"/>
</dbReference>
<dbReference type="SUPFAM" id="SSF54534">
    <property type="entry name" value="FKBP-like"/>
    <property type="match status" value="2"/>
</dbReference>
<dbReference type="SUPFAM" id="SSF109998">
    <property type="entry name" value="Triger factor/SurA peptide-binding domain-like"/>
    <property type="match status" value="1"/>
</dbReference>
<dbReference type="PROSITE" id="PS50198">
    <property type="entry name" value="PPIC_PPIASE_2"/>
    <property type="match status" value="2"/>
</dbReference>